<gene>
    <name evidence="1" type="primary">nuoI2</name>
    <name type="ordered locus">Acid345_1845</name>
</gene>
<accession>Q1IQK4</accession>
<proteinExistence type="inferred from homology"/>
<protein>
    <recommendedName>
        <fullName evidence="1">NADH-quinone oxidoreductase subunit I 2</fullName>
        <ecNumber evidence="1">7.1.1.-</ecNumber>
    </recommendedName>
    <alternativeName>
        <fullName evidence="1">NADH dehydrogenase I subunit I 2</fullName>
    </alternativeName>
    <alternativeName>
        <fullName evidence="1">NDH-1 subunit I 2</fullName>
    </alternativeName>
</protein>
<sequence length="175" mass="19349">MGYLRNIGAIAKGMGITFSEMFKPTTVENYPDGPGVLRGAVFQERFRGMHVLQRDENGLEKCVACFLCAAACPSNCIYIEAAENTETNRVSGAERYAKVYNIDYNRCIFCGYCVEACPTDAITHGHGFELATFNASNLVYRKEQLLSGKPAHIGANEIFASDSREQQRLDQKAAK</sequence>
<reference key="1">
    <citation type="journal article" date="2009" name="Appl. Environ. Microbiol.">
        <title>Three genomes from the phylum Acidobacteria provide insight into the lifestyles of these microorganisms in soils.</title>
        <authorList>
            <person name="Ward N.L."/>
            <person name="Challacombe J.F."/>
            <person name="Janssen P.H."/>
            <person name="Henrissat B."/>
            <person name="Coutinho P.M."/>
            <person name="Wu M."/>
            <person name="Xie G."/>
            <person name="Haft D.H."/>
            <person name="Sait M."/>
            <person name="Badger J."/>
            <person name="Barabote R.D."/>
            <person name="Bradley B."/>
            <person name="Brettin T.S."/>
            <person name="Brinkac L.M."/>
            <person name="Bruce D."/>
            <person name="Creasy T."/>
            <person name="Daugherty S.C."/>
            <person name="Davidsen T.M."/>
            <person name="DeBoy R.T."/>
            <person name="Detter J.C."/>
            <person name="Dodson R.J."/>
            <person name="Durkin A.S."/>
            <person name="Ganapathy A."/>
            <person name="Gwinn-Giglio M."/>
            <person name="Han C.S."/>
            <person name="Khouri H."/>
            <person name="Kiss H."/>
            <person name="Kothari S.P."/>
            <person name="Madupu R."/>
            <person name="Nelson K.E."/>
            <person name="Nelson W.C."/>
            <person name="Paulsen I."/>
            <person name="Penn K."/>
            <person name="Ren Q."/>
            <person name="Rosovitz M.J."/>
            <person name="Selengut J.D."/>
            <person name="Shrivastava S."/>
            <person name="Sullivan S.A."/>
            <person name="Tapia R."/>
            <person name="Thompson L.S."/>
            <person name="Watkins K.L."/>
            <person name="Yang Q."/>
            <person name="Yu C."/>
            <person name="Zafar N."/>
            <person name="Zhou L."/>
            <person name="Kuske C.R."/>
        </authorList>
    </citation>
    <scope>NUCLEOTIDE SEQUENCE [LARGE SCALE GENOMIC DNA]</scope>
    <source>
        <strain>Ellin345</strain>
    </source>
</reference>
<name>NUOI2_KORVE</name>
<organism>
    <name type="scientific">Koribacter versatilis (strain Ellin345)</name>
    <dbReference type="NCBI Taxonomy" id="204669"/>
    <lineage>
        <taxon>Bacteria</taxon>
        <taxon>Pseudomonadati</taxon>
        <taxon>Acidobacteriota</taxon>
        <taxon>Terriglobia</taxon>
        <taxon>Terriglobales</taxon>
        <taxon>Candidatus Korobacteraceae</taxon>
        <taxon>Candidatus Korobacter</taxon>
    </lineage>
</organism>
<evidence type="ECO:0000255" key="1">
    <source>
        <dbReference type="HAMAP-Rule" id="MF_01351"/>
    </source>
</evidence>
<feature type="chain" id="PRO_0000298471" description="NADH-quinone oxidoreductase subunit I 2">
    <location>
        <begin position="1"/>
        <end position="175"/>
    </location>
</feature>
<feature type="domain" description="4Fe-4S ferredoxin-type 1" evidence="1">
    <location>
        <begin position="50"/>
        <end position="82"/>
    </location>
</feature>
<feature type="domain" description="4Fe-4S ferredoxin-type 2" evidence="1">
    <location>
        <begin position="98"/>
        <end position="127"/>
    </location>
</feature>
<feature type="binding site" evidence="1">
    <location>
        <position position="62"/>
    </location>
    <ligand>
        <name>[4Fe-4S] cluster</name>
        <dbReference type="ChEBI" id="CHEBI:49883"/>
        <label>1</label>
    </ligand>
</feature>
<feature type="binding site" evidence="1">
    <location>
        <position position="65"/>
    </location>
    <ligand>
        <name>[4Fe-4S] cluster</name>
        <dbReference type="ChEBI" id="CHEBI:49883"/>
        <label>1</label>
    </ligand>
</feature>
<feature type="binding site" evidence="1">
    <location>
        <position position="68"/>
    </location>
    <ligand>
        <name>[4Fe-4S] cluster</name>
        <dbReference type="ChEBI" id="CHEBI:49883"/>
        <label>1</label>
    </ligand>
</feature>
<feature type="binding site" evidence="1">
    <location>
        <position position="72"/>
    </location>
    <ligand>
        <name>[4Fe-4S] cluster</name>
        <dbReference type="ChEBI" id="CHEBI:49883"/>
        <label>2</label>
    </ligand>
</feature>
<feature type="binding site" evidence="1">
    <location>
        <position position="107"/>
    </location>
    <ligand>
        <name>[4Fe-4S] cluster</name>
        <dbReference type="ChEBI" id="CHEBI:49883"/>
        <label>2</label>
    </ligand>
</feature>
<feature type="binding site" evidence="1">
    <location>
        <position position="110"/>
    </location>
    <ligand>
        <name>[4Fe-4S] cluster</name>
        <dbReference type="ChEBI" id="CHEBI:49883"/>
        <label>2</label>
    </ligand>
</feature>
<feature type="binding site" evidence="1">
    <location>
        <position position="113"/>
    </location>
    <ligand>
        <name>[4Fe-4S] cluster</name>
        <dbReference type="ChEBI" id="CHEBI:49883"/>
        <label>2</label>
    </ligand>
</feature>
<feature type="binding site" evidence="1">
    <location>
        <position position="117"/>
    </location>
    <ligand>
        <name>[4Fe-4S] cluster</name>
        <dbReference type="ChEBI" id="CHEBI:49883"/>
        <label>1</label>
    </ligand>
</feature>
<dbReference type="EC" id="7.1.1.-" evidence="1"/>
<dbReference type="EMBL" id="CP000360">
    <property type="protein sequence ID" value="ABF40846.1"/>
    <property type="molecule type" value="Genomic_DNA"/>
</dbReference>
<dbReference type="RefSeq" id="WP_011522648.1">
    <property type="nucleotide sequence ID" value="NC_008009.1"/>
</dbReference>
<dbReference type="SMR" id="Q1IQK4"/>
<dbReference type="STRING" id="204669.Acid345_1845"/>
<dbReference type="EnsemblBacteria" id="ABF40846">
    <property type="protein sequence ID" value="ABF40846"/>
    <property type="gene ID" value="Acid345_1845"/>
</dbReference>
<dbReference type="KEGG" id="aba:Acid345_1845"/>
<dbReference type="eggNOG" id="COG1143">
    <property type="taxonomic scope" value="Bacteria"/>
</dbReference>
<dbReference type="HOGENOM" id="CLU_067218_4_3_0"/>
<dbReference type="OrthoDB" id="9803192at2"/>
<dbReference type="Proteomes" id="UP000002432">
    <property type="component" value="Chromosome"/>
</dbReference>
<dbReference type="GO" id="GO:0005886">
    <property type="term" value="C:plasma membrane"/>
    <property type="evidence" value="ECO:0007669"/>
    <property type="project" value="UniProtKB-SubCell"/>
</dbReference>
<dbReference type="GO" id="GO:0051539">
    <property type="term" value="F:4 iron, 4 sulfur cluster binding"/>
    <property type="evidence" value="ECO:0007669"/>
    <property type="project" value="UniProtKB-KW"/>
</dbReference>
<dbReference type="GO" id="GO:0005506">
    <property type="term" value="F:iron ion binding"/>
    <property type="evidence" value="ECO:0007669"/>
    <property type="project" value="UniProtKB-UniRule"/>
</dbReference>
<dbReference type="GO" id="GO:0050136">
    <property type="term" value="F:NADH:ubiquinone reductase (non-electrogenic) activity"/>
    <property type="evidence" value="ECO:0007669"/>
    <property type="project" value="UniProtKB-UniRule"/>
</dbReference>
<dbReference type="GO" id="GO:0048038">
    <property type="term" value="F:quinone binding"/>
    <property type="evidence" value="ECO:0007669"/>
    <property type="project" value="UniProtKB-KW"/>
</dbReference>
<dbReference type="GO" id="GO:0009060">
    <property type="term" value="P:aerobic respiration"/>
    <property type="evidence" value="ECO:0007669"/>
    <property type="project" value="TreeGrafter"/>
</dbReference>
<dbReference type="Gene3D" id="3.30.70.3270">
    <property type="match status" value="1"/>
</dbReference>
<dbReference type="HAMAP" id="MF_01351">
    <property type="entry name" value="NDH1_NuoI"/>
    <property type="match status" value="1"/>
</dbReference>
<dbReference type="InterPro" id="IPR017896">
    <property type="entry name" value="4Fe4S_Fe-S-bd"/>
</dbReference>
<dbReference type="InterPro" id="IPR017900">
    <property type="entry name" value="4Fe4S_Fe_S_CS"/>
</dbReference>
<dbReference type="InterPro" id="IPR010226">
    <property type="entry name" value="NADH_quinone_OxRdtase_chainI"/>
</dbReference>
<dbReference type="NCBIfam" id="TIGR01971">
    <property type="entry name" value="NuoI"/>
    <property type="match status" value="1"/>
</dbReference>
<dbReference type="NCBIfam" id="NF004537">
    <property type="entry name" value="PRK05888.1-3"/>
    <property type="match status" value="1"/>
</dbReference>
<dbReference type="PANTHER" id="PTHR10849:SF20">
    <property type="entry name" value="NADH DEHYDROGENASE [UBIQUINONE] IRON-SULFUR PROTEIN 8, MITOCHONDRIAL"/>
    <property type="match status" value="1"/>
</dbReference>
<dbReference type="PANTHER" id="PTHR10849">
    <property type="entry name" value="NADH DEHYDROGENASE UBIQUINONE IRON-SULFUR PROTEIN 8, MITOCHONDRIAL"/>
    <property type="match status" value="1"/>
</dbReference>
<dbReference type="Pfam" id="PF12838">
    <property type="entry name" value="Fer4_7"/>
    <property type="match status" value="1"/>
</dbReference>
<dbReference type="SUPFAM" id="SSF54862">
    <property type="entry name" value="4Fe-4S ferredoxins"/>
    <property type="match status" value="1"/>
</dbReference>
<dbReference type="PROSITE" id="PS00198">
    <property type="entry name" value="4FE4S_FER_1"/>
    <property type="match status" value="2"/>
</dbReference>
<dbReference type="PROSITE" id="PS51379">
    <property type="entry name" value="4FE4S_FER_2"/>
    <property type="match status" value="2"/>
</dbReference>
<keyword id="KW-0004">4Fe-4S</keyword>
<keyword id="KW-0997">Cell inner membrane</keyword>
<keyword id="KW-1003">Cell membrane</keyword>
<keyword id="KW-0408">Iron</keyword>
<keyword id="KW-0411">Iron-sulfur</keyword>
<keyword id="KW-0472">Membrane</keyword>
<keyword id="KW-0479">Metal-binding</keyword>
<keyword id="KW-0520">NAD</keyword>
<keyword id="KW-0874">Quinone</keyword>
<keyword id="KW-1185">Reference proteome</keyword>
<keyword id="KW-0677">Repeat</keyword>
<keyword id="KW-1278">Translocase</keyword>
<keyword id="KW-0830">Ubiquinone</keyword>
<comment type="function">
    <text evidence="1">NDH-1 shuttles electrons from NADH, via FMN and iron-sulfur (Fe-S) centers, to quinones in the respiratory chain. The immediate electron acceptor for the enzyme in this species is believed to be ubiquinone. Couples the redox reaction to proton translocation (for every two electrons transferred, four hydrogen ions are translocated across the cytoplasmic membrane), and thus conserves the redox energy in a proton gradient.</text>
</comment>
<comment type="catalytic activity">
    <reaction evidence="1">
        <text>a quinone + NADH + 5 H(+)(in) = a quinol + NAD(+) + 4 H(+)(out)</text>
        <dbReference type="Rhea" id="RHEA:57888"/>
        <dbReference type="ChEBI" id="CHEBI:15378"/>
        <dbReference type="ChEBI" id="CHEBI:24646"/>
        <dbReference type="ChEBI" id="CHEBI:57540"/>
        <dbReference type="ChEBI" id="CHEBI:57945"/>
        <dbReference type="ChEBI" id="CHEBI:132124"/>
    </reaction>
</comment>
<comment type="cofactor">
    <cofactor evidence="1">
        <name>[4Fe-4S] cluster</name>
        <dbReference type="ChEBI" id="CHEBI:49883"/>
    </cofactor>
    <text evidence="1">Binds 2 [4Fe-4S] clusters per subunit.</text>
</comment>
<comment type="subunit">
    <text evidence="1">NDH-1 is composed of 14 different subunits. Subunits NuoA, H, J, K, L, M, N constitute the membrane sector of the complex.</text>
</comment>
<comment type="subcellular location">
    <subcellularLocation>
        <location evidence="1">Cell inner membrane</location>
        <topology evidence="1">Peripheral membrane protein</topology>
    </subcellularLocation>
</comment>
<comment type="similarity">
    <text evidence="1">Belongs to the complex I 23 kDa subunit family.</text>
</comment>